<name>PSMG4_MOUSE</name>
<evidence type="ECO:0000269" key="1">
    <source>
    </source>
</evidence>
<evidence type="ECO:0000305" key="2"/>
<protein>
    <recommendedName>
        <fullName>Proteasome assembly chaperone 4</fullName>
        <shortName>PAC-4</shortName>
        <shortName>mPAC4</shortName>
    </recommendedName>
    <alternativeName>
        <fullName>Proteasome chaperone homolog 4</fullName>
        <shortName>Pba4</shortName>
    </alternativeName>
</protein>
<accession>P0C7N9</accession>
<proteinExistence type="evidence at protein level"/>
<reference key="1">
    <citation type="journal article" date="2009" name="PLoS Biol.">
        <title>Lineage-specific biology revealed by a finished genome assembly of the mouse.</title>
        <authorList>
            <person name="Church D.M."/>
            <person name="Goodstadt L."/>
            <person name="Hillier L.W."/>
            <person name="Zody M.C."/>
            <person name="Goldstein S."/>
            <person name="She X."/>
            <person name="Bult C.J."/>
            <person name="Agarwala R."/>
            <person name="Cherry J.L."/>
            <person name="DiCuccio M."/>
            <person name="Hlavina W."/>
            <person name="Kapustin Y."/>
            <person name="Meric P."/>
            <person name="Maglott D."/>
            <person name="Birtle Z."/>
            <person name="Marques A.C."/>
            <person name="Graves T."/>
            <person name="Zhou S."/>
            <person name="Teague B."/>
            <person name="Potamousis K."/>
            <person name="Churas C."/>
            <person name="Place M."/>
            <person name="Herschleb J."/>
            <person name="Runnheim R."/>
            <person name="Forrest D."/>
            <person name="Amos-Landgraf J."/>
            <person name="Schwartz D.C."/>
            <person name="Cheng Z."/>
            <person name="Lindblad-Toh K."/>
            <person name="Eichler E.E."/>
            <person name="Ponting C.P."/>
        </authorList>
    </citation>
    <scope>NUCLEOTIDE SEQUENCE [LARGE SCALE GENOMIC DNA]</scope>
    <source>
        <strain>C57BL/6J</strain>
    </source>
</reference>
<reference key="2">
    <citation type="journal article" date="2004" name="Genome Res.">
        <title>The status, quality, and expansion of the NIH full-length cDNA project: the Mammalian Gene Collection (MGC).</title>
        <authorList>
            <consortium name="The MGC Project Team"/>
        </authorList>
    </citation>
    <scope>NUCLEOTIDE SEQUENCE [LARGE SCALE MRNA]</scope>
    <source>
        <tissue>Brain</tissue>
    </source>
</reference>
<reference key="3">
    <citation type="journal article" date="2007" name="Mol. Cell">
        <title>20S proteasome assembly is orchestrated by two distinct pairs of chaperones in yeast and in mammals.</title>
        <authorList>
            <person name="Le Tallec B."/>
            <person name="Barrault M.-B."/>
            <person name="Courbeyrette R."/>
            <person name="Guerois R."/>
            <person name="Marsolier-Kergoat M.-C."/>
            <person name="Peyroche A."/>
        </authorList>
    </citation>
    <scope>FUNCTION</scope>
    <scope>INTERACTION WITH PSMG3 AND PROTEASOME</scope>
</reference>
<reference key="4">
    <citation type="journal article" date="2010" name="Cell">
        <title>A tissue-specific atlas of mouse protein phosphorylation and expression.</title>
        <authorList>
            <person name="Huttlin E.L."/>
            <person name="Jedrychowski M.P."/>
            <person name="Elias J.E."/>
            <person name="Goswami T."/>
            <person name="Rad R."/>
            <person name="Beausoleil S.A."/>
            <person name="Villen J."/>
            <person name="Haas W."/>
            <person name="Sowa M.E."/>
            <person name="Gygi S.P."/>
        </authorList>
    </citation>
    <scope>IDENTIFICATION BY MASS SPECTROMETRY [LARGE SCALE ANALYSIS]</scope>
    <source>
        <tissue>Brain</tissue>
        <tissue>Liver</tissue>
        <tissue>Pancreas</tissue>
        <tissue>Testis</tissue>
    </source>
</reference>
<dbReference type="EMBL" id="AC139242">
    <property type="status" value="NOT_ANNOTATED_CDS"/>
    <property type="molecule type" value="Genomic_DNA"/>
</dbReference>
<dbReference type="EMBL" id="BC070417">
    <property type="status" value="NOT_ANNOTATED_CDS"/>
    <property type="molecule type" value="mRNA"/>
</dbReference>
<dbReference type="CCDS" id="CCDS49230.1"/>
<dbReference type="RefSeq" id="NP_001094900.1">
    <property type="nucleotide sequence ID" value="NM_001101430.2"/>
</dbReference>
<dbReference type="SMR" id="P0C7N9"/>
<dbReference type="BioGRID" id="213601">
    <property type="interactions" value="1"/>
</dbReference>
<dbReference type="FunCoup" id="P0C7N9">
    <property type="interactions" value="72"/>
</dbReference>
<dbReference type="STRING" id="10090.ENSMUSP00000115881"/>
<dbReference type="PhosphoSitePlus" id="P0C7N9"/>
<dbReference type="PaxDb" id="10090-ENSMUSP00000115881"/>
<dbReference type="PeptideAtlas" id="P0C7N9"/>
<dbReference type="ProteomicsDB" id="291578"/>
<dbReference type="Pumba" id="P0C7N9"/>
<dbReference type="Antibodypedia" id="78115">
    <property type="antibodies" value="7 antibodies from 4 providers"/>
</dbReference>
<dbReference type="Ensembl" id="ENSMUST00000147632.3">
    <property type="protein sequence ID" value="ENSMUSP00000115881.2"/>
    <property type="gene ID" value="ENSMUSG00000071451.11"/>
</dbReference>
<dbReference type="GeneID" id="69666"/>
<dbReference type="KEGG" id="mmu:69666"/>
<dbReference type="UCSC" id="uc007qbe.3">
    <property type="organism name" value="mouse"/>
</dbReference>
<dbReference type="AGR" id="MGI:1916916"/>
<dbReference type="CTD" id="389362"/>
<dbReference type="MGI" id="MGI:1916916">
    <property type="gene designation" value="Psmg4"/>
</dbReference>
<dbReference type="VEuPathDB" id="HostDB:ENSMUSG00000071451"/>
<dbReference type="eggNOG" id="ENOG502S31R">
    <property type="taxonomic scope" value="Eukaryota"/>
</dbReference>
<dbReference type="GeneTree" id="ENSGT00390000011804"/>
<dbReference type="HOGENOM" id="CLU_138031_0_0_1"/>
<dbReference type="InParanoid" id="P0C7N9"/>
<dbReference type="OMA" id="HVMKLDG"/>
<dbReference type="OrthoDB" id="368507at2759"/>
<dbReference type="PhylomeDB" id="P0C7N9"/>
<dbReference type="TreeFam" id="TF353302"/>
<dbReference type="Reactome" id="R-MMU-9907900">
    <property type="pathway name" value="Proteasome assembly"/>
</dbReference>
<dbReference type="BioGRID-ORCS" id="69666">
    <property type="hits" value="26 hits in 74 CRISPR screens"/>
</dbReference>
<dbReference type="ChiTaRS" id="Psmg4">
    <property type="organism name" value="mouse"/>
</dbReference>
<dbReference type="PRO" id="PR:P0C7N9"/>
<dbReference type="Proteomes" id="UP000000589">
    <property type="component" value="Chromosome 13"/>
</dbReference>
<dbReference type="RNAct" id="P0C7N9">
    <property type="molecule type" value="protein"/>
</dbReference>
<dbReference type="Bgee" id="ENSMUSG00000071451">
    <property type="expression patterns" value="Expressed in embryonic brain and 183 other cell types or tissues"/>
</dbReference>
<dbReference type="ExpressionAtlas" id="P0C7N9">
    <property type="expression patterns" value="baseline and differential"/>
</dbReference>
<dbReference type="GO" id="GO:0005829">
    <property type="term" value="C:cytosol"/>
    <property type="evidence" value="ECO:0000304"/>
    <property type="project" value="Reactome"/>
</dbReference>
<dbReference type="GO" id="GO:0032991">
    <property type="term" value="C:protein-containing complex"/>
    <property type="evidence" value="ECO:0000314"/>
    <property type="project" value="UniProtKB"/>
</dbReference>
<dbReference type="GO" id="GO:0044877">
    <property type="term" value="F:protein-containing complex binding"/>
    <property type="evidence" value="ECO:0000314"/>
    <property type="project" value="UniProtKB"/>
</dbReference>
<dbReference type="GO" id="GO:0043248">
    <property type="term" value="P:proteasome assembly"/>
    <property type="evidence" value="ECO:0007669"/>
    <property type="project" value="InterPro"/>
</dbReference>
<dbReference type="InterPro" id="IPR032157">
    <property type="entry name" value="PAC4"/>
</dbReference>
<dbReference type="PANTHER" id="PTHR33559">
    <property type="entry name" value="PROTEASOME ASSEMBLY CHAPERONE 4"/>
    <property type="match status" value="1"/>
</dbReference>
<dbReference type="PANTHER" id="PTHR33559:SF1">
    <property type="entry name" value="PROTEASOME ASSEMBLY CHAPERONE 4"/>
    <property type="match status" value="1"/>
</dbReference>
<dbReference type="Pfam" id="PF16093">
    <property type="entry name" value="PAC4"/>
    <property type="match status" value="1"/>
</dbReference>
<gene>
    <name type="primary">Psmg4</name>
    <name type="synonym">Pac4</name>
</gene>
<comment type="function">
    <text evidence="1">Chaperone protein which promotes assembly of the 20S proteasome.</text>
</comment>
<comment type="subunit">
    <text evidence="1">Interacts with PSMG3. Associates with alpha subunits of the 20S proteasome.</text>
</comment>
<comment type="similarity">
    <text evidence="2">Belongs to the PSMG4 family.</text>
</comment>
<sequence>MEESRAAADADVSLHNFSARLWEQLVHFHVMRLTDSLFLWVGATPHLRNLAVAMCSRYDPIPVCTSLFGDTSDTTSTGLAQRLARKTSKQVFVSYNLSNTDSNFTLLVENRIKEEMETFPEKF</sequence>
<organism>
    <name type="scientific">Mus musculus</name>
    <name type="common">Mouse</name>
    <dbReference type="NCBI Taxonomy" id="10090"/>
    <lineage>
        <taxon>Eukaryota</taxon>
        <taxon>Metazoa</taxon>
        <taxon>Chordata</taxon>
        <taxon>Craniata</taxon>
        <taxon>Vertebrata</taxon>
        <taxon>Euteleostomi</taxon>
        <taxon>Mammalia</taxon>
        <taxon>Eutheria</taxon>
        <taxon>Euarchontoglires</taxon>
        <taxon>Glires</taxon>
        <taxon>Rodentia</taxon>
        <taxon>Myomorpha</taxon>
        <taxon>Muroidea</taxon>
        <taxon>Muridae</taxon>
        <taxon>Murinae</taxon>
        <taxon>Mus</taxon>
        <taxon>Mus</taxon>
    </lineage>
</organism>
<keyword id="KW-0143">Chaperone</keyword>
<keyword id="KW-1185">Reference proteome</keyword>
<feature type="chain" id="PRO_0000341398" description="Proteasome assembly chaperone 4">
    <location>
        <begin position="1"/>
        <end position="123"/>
    </location>
</feature>